<sequence length="303" mass="33901">MSFTTKVKEELIHLSTGDNNELAAIIKLSGSLGLAHQSLHLSITTENAKIARYIYSLIEDAYVIVPEIRYHQKTNLRKNRVYTVYVEQGVETILADLKLADSFFGLETGIEPQVLSDDNAGRSYLKGAFLAAGSIRDPESGKYQLEIYSVYLDHAQDLAQLMQKFMLDAKTIEHKSGAVTYVQKAEDIMDFLIIIGAMSCKEDFEAIKLLREARNDINRANNAETANIAKTISASMKTINNIIKIMDTIGLESLPIELQQVAQLRVKHPDYSIQQVADALEFPITKSGVNHRLRKINKIADDL</sequence>
<feature type="chain" id="PRO_0000376589" description="Probable cell division protein WhiA">
    <location>
        <begin position="1"/>
        <end position="303"/>
    </location>
</feature>
<feature type="DNA-binding region" description="H-T-H motif" evidence="1">
    <location>
        <begin position="272"/>
        <end position="303"/>
    </location>
</feature>
<gene>
    <name evidence="1" type="primary">whiA</name>
    <name type="ordered locus">MGAS10750_Spy0559</name>
</gene>
<accession>Q1J7K2</accession>
<comment type="function">
    <text evidence="1">Involved in cell division and chromosome segregation.</text>
</comment>
<comment type="similarity">
    <text evidence="1">Belongs to the WhiA family.</text>
</comment>
<name>WHIA_STRPF</name>
<evidence type="ECO:0000255" key="1">
    <source>
        <dbReference type="HAMAP-Rule" id="MF_01420"/>
    </source>
</evidence>
<keyword id="KW-0131">Cell cycle</keyword>
<keyword id="KW-0132">Cell division</keyword>
<keyword id="KW-0238">DNA-binding</keyword>
<organism>
    <name type="scientific">Streptococcus pyogenes serotype M4 (strain MGAS10750)</name>
    <dbReference type="NCBI Taxonomy" id="370554"/>
    <lineage>
        <taxon>Bacteria</taxon>
        <taxon>Bacillati</taxon>
        <taxon>Bacillota</taxon>
        <taxon>Bacilli</taxon>
        <taxon>Lactobacillales</taxon>
        <taxon>Streptococcaceae</taxon>
        <taxon>Streptococcus</taxon>
    </lineage>
</organism>
<reference key="1">
    <citation type="journal article" date="2006" name="Proc. Natl. Acad. Sci. U.S.A.">
        <title>Molecular genetic anatomy of inter- and intraserotype variation in the human bacterial pathogen group A Streptococcus.</title>
        <authorList>
            <person name="Beres S.B."/>
            <person name="Richter E.W."/>
            <person name="Nagiec M.J."/>
            <person name="Sumby P."/>
            <person name="Porcella S.F."/>
            <person name="DeLeo F.R."/>
            <person name="Musser J.M."/>
        </authorList>
    </citation>
    <scope>NUCLEOTIDE SEQUENCE [LARGE SCALE GENOMIC DNA]</scope>
    <source>
        <strain>MGAS10750</strain>
    </source>
</reference>
<proteinExistence type="inferred from homology"/>
<protein>
    <recommendedName>
        <fullName evidence="1">Probable cell division protein WhiA</fullName>
    </recommendedName>
</protein>
<dbReference type="EMBL" id="CP000262">
    <property type="protein sequence ID" value="ABF37509.1"/>
    <property type="molecule type" value="Genomic_DNA"/>
</dbReference>
<dbReference type="SMR" id="Q1J7K2"/>
<dbReference type="KEGG" id="spi:MGAS10750_Spy0559"/>
<dbReference type="HOGENOM" id="CLU_053282_0_0_9"/>
<dbReference type="Proteomes" id="UP000002434">
    <property type="component" value="Chromosome"/>
</dbReference>
<dbReference type="GO" id="GO:0003677">
    <property type="term" value="F:DNA binding"/>
    <property type="evidence" value="ECO:0007669"/>
    <property type="project" value="UniProtKB-UniRule"/>
</dbReference>
<dbReference type="GO" id="GO:0051301">
    <property type="term" value="P:cell division"/>
    <property type="evidence" value="ECO:0007669"/>
    <property type="project" value="UniProtKB-UniRule"/>
</dbReference>
<dbReference type="GO" id="GO:0043937">
    <property type="term" value="P:regulation of sporulation"/>
    <property type="evidence" value="ECO:0007669"/>
    <property type="project" value="InterPro"/>
</dbReference>
<dbReference type="Gene3D" id="3.10.28.10">
    <property type="entry name" value="Homing endonucleases"/>
    <property type="match status" value="1"/>
</dbReference>
<dbReference type="HAMAP" id="MF_01420">
    <property type="entry name" value="HTH_type_WhiA"/>
    <property type="match status" value="1"/>
</dbReference>
<dbReference type="InterPro" id="IPR027434">
    <property type="entry name" value="Homing_endonucl"/>
</dbReference>
<dbReference type="InterPro" id="IPR018478">
    <property type="entry name" value="Sporu_reg_WhiA_N_dom"/>
</dbReference>
<dbReference type="InterPro" id="IPR003802">
    <property type="entry name" value="Sporulation_regulator_WhiA"/>
</dbReference>
<dbReference type="InterPro" id="IPR023054">
    <property type="entry name" value="Sporulation_regulator_WhiA_C"/>
</dbReference>
<dbReference type="InterPro" id="IPR039518">
    <property type="entry name" value="WhiA_LAGLIDADG_dom"/>
</dbReference>
<dbReference type="NCBIfam" id="TIGR00647">
    <property type="entry name" value="DNA_bind_WhiA"/>
    <property type="match status" value="1"/>
</dbReference>
<dbReference type="PANTHER" id="PTHR37307">
    <property type="entry name" value="CELL DIVISION PROTEIN WHIA-RELATED"/>
    <property type="match status" value="1"/>
</dbReference>
<dbReference type="PANTHER" id="PTHR37307:SF1">
    <property type="entry name" value="CELL DIVISION PROTEIN WHIA-RELATED"/>
    <property type="match status" value="1"/>
</dbReference>
<dbReference type="Pfam" id="PF02650">
    <property type="entry name" value="HTH_WhiA"/>
    <property type="match status" value="1"/>
</dbReference>
<dbReference type="Pfam" id="PF14527">
    <property type="entry name" value="LAGLIDADG_WhiA"/>
    <property type="match status" value="1"/>
</dbReference>
<dbReference type="Pfam" id="PF10298">
    <property type="entry name" value="WhiA_N"/>
    <property type="match status" value="1"/>
</dbReference>
<dbReference type="SUPFAM" id="SSF55608">
    <property type="entry name" value="Homing endonucleases"/>
    <property type="match status" value="1"/>
</dbReference>